<accession>A7I7T6</accession>
<organism>
    <name type="scientific">Methanoregula boonei (strain DSM 21154 / JCM 14090 / 6A8)</name>
    <dbReference type="NCBI Taxonomy" id="456442"/>
    <lineage>
        <taxon>Archaea</taxon>
        <taxon>Methanobacteriati</taxon>
        <taxon>Methanobacteriota</taxon>
        <taxon>Stenosarchaea group</taxon>
        <taxon>Methanomicrobia</taxon>
        <taxon>Methanomicrobiales</taxon>
        <taxon>Methanoregulaceae</taxon>
        <taxon>Methanoregula</taxon>
    </lineage>
</organism>
<sequence>MDPVEEVLNNPATRAYIHRLIGDEGINLLERFPKDGEHSDEDLAASTGINLNSVRHTLYTLYEKRLAEYHRIKNNETGWLTYLWQLRIDLLYDAIREDMETVLSKLERRARFEEENDFYICKDCHDIYTFTVAMGGNFTCPNCGQPLSHFENETLAKALRARIEIMKKTLGHA</sequence>
<proteinExistence type="inferred from homology"/>
<keyword id="KW-0238">DNA-binding</keyword>
<keyword id="KW-1185">Reference proteome</keyword>
<keyword id="KW-0804">Transcription</keyword>
<keyword id="KW-0805">Transcription regulation</keyword>
<gene>
    <name evidence="1" type="primary">tfe</name>
    <name type="ordered locus">Mboo_1279</name>
</gene>
<feature type="chain" id="PRO_0000326606" description="Transcription factor E">
    <location>
        <begin position="1"/>
        <end position="173"/>
    </location>
</feature>
<feature type="domain" description="HTH TFE/IIEalpha-type" evidence="1">
    <location>
        <begin position="9"/>
        <end position="92"/>
    </location>
</feature>
<name>TFE_METB6</name>
<evidence type="ECO:0000255" key="1">
    <source>
        <dbReference type="HAMAP-Rule" id="MF_01909"/>
    </source>
</evidence>
<comment type="function">
    <text evidence="1">Transcription factor that plays a role in the activation of archaeal genes transcribed by RNA polymerase. Facilitates transcription initiation by enhancing TATA-box recognition by TATA-box-binding protein (Tbp), and transcription factor B (Tfb) and RNA polymerase recruitment. Not absolutely required for transcription in vitro, but particularly important in cases where Tbp or Tfb function is not optimal. It dynamically alters the nucleic acid-binding properties of RNA polymerases by stabilizing the initiation complex and destabilizing elongation complexes. Seems to translocate with the RNA polymerase following initiation and acts by binding to the non template strand of the transcription bubble in elongation complexes.</text>
</comment>
<comment type="subunit">
    <text evidence="1">Monomer. Interaction with RNA polymerase subunits RpoF and RpoE is necessary for Tfe stimulatory transcription activity. Able to interact with Tbp and RNA polymerase in the absence of DNA promoter. Interacts both with the preinitiation and elongation complexes.</text>
</comment>
<comment type="domain">
    <text evidence="1">The winged helix domain is involved in binding to DNA in the preinitiation complex.</text>
</comment>
<comment type="similarity">
    <text evidence="1">Belongs to the TFE family.</text>
</comment>
<reference key="1">
    <citation type="journal article" date="2015" name="Microbiology">
        <title>Genome of Methanoregula boonei 6A8 reveals adaptations to oligotrophic peatland environments.</title>
        <authorList>
            <person name="Braeuer S."/>
            <person name="Cadillo-Quiroz H."/>
            <person name="Kyrpides N."/>
            <person name="Woyke T."/>
            <person name="Goodwin L."/>
            <person name="Detter C."/>
            <person name="Podell S."/>
            <person name="Yavitt J.B."/>
            <person name="Zinder S.H."/>
        </authorList>
    </citation>
    <scope>NUCLEOTIDE SEQUENCE [LARGE SCALE GENOMIC DNA]</scope>
    <source>
        <strain>DSM 21154 / JCM 14090 / 6A8</strain>
    </source>
</reference>
<protein>
    <recommendedName>
        <fullName evidence="1">Transcription factor E</fullName>
        <shortName evidence="1">TFE</shortName>
    </recommendedName>
    <alternativeName>
        <fullName evidence="1">TFIIE subunit alpha homolog</fullName>
    </alternativeName>
    <alternativeName>
        <fullName evidence="1">Transcription initiation factor TFIIE</fullName>
    </alternativeName>
</protein>
<dbReference type="EMBL" id="CP000780">
    <property type="protein sequence ID" value="ABS55797.1"/>
    <property type="molecule type" value="Genomic_DNA"/>
</dbReference>
<dbReference type="RefSeq" id="WP_012106829.1">
    <property type="nucleotide sequence ID" value="NC_009712.1"/>
</dbReference>
<dbReference type="SMR" id="A7I7T6"/>
<dbReference type="STRING" id="456442.Mboo_1279"/>
<dbReference type="GeneID" id="5410299"/>
<dbReference type="KEGG" id="mbn:Mboo_1279"/>
<dbReference type="eggNOG" id="arCOG04270">
    <property type="taxonomic scope" value="Archaea"/>
</dbReference>
<dbReference type="HOGENOM" id="CLU_100097_0_0_2"/>
<dbReference type="OrthoDB" id="5935at2157"/>
<dbReference type="Proteomes" id="UP000002408">
    <property type="component" value="Chromosome"/>
</dbReference>
<dbReference type="GO" id="GO:0003677">
    <property type="term" value="F:DNA binding"/>
    <property type="evidence" value="ECO:0007669"/>
    <property type="project" value="UniProtKB-KW"/>
</dbReference>
<dbReference type="GO" id="GO:0006355">
    <property type="term" value="P:regulation of DNA-templated transcription"/>
    <property type="evidence" value="ECO:0007669"/>
    <property type="project" value="InterPro"/>
</dbReference>
<dbReference type="GO" id="GO:0006367">
    <property type="term" value="P:transcription initiation at RNA polymerase II promoter"/>
    <property type="evidence" value="ECO:0007669"/>
    <property type="project" value="InterPro"/>
</dbReference>
<dbReference type="Gene3D" id="1.10.10.10">
    <property type="entry name" value="Winged helix-like DNA-binding domain superfamily/Winged helix DNA-binding domain"/>
    <property type="match status" value="1"/>
</dbReference>
<dbReference type="HAMAP" id="MF_01909">
    <property type="entry name" value="TFE_arch"/>
    <property type="match status" value="1"/>
</dbReference>
<dbReference type="InterPro" id="IPR016481">
    <property type="entry name" value="TF_E_archaea"/>
</dbReference>
<dbReference type="InterPro" id="IPR039997">
    <property type="entry name" value="TFE"/>
</dbReference>
<dbReference type="InterPro" id="IPR017919">
    <property type="entry name" value="TFIIE/TFIIEa_HTH"/>
</dbReference>
<dbReference type="InterPro" id="IPR002853">
    <property type="entry name" value="TFIIE_asu"/>
</dbReference>
<dbReference type="InterPro" id="IPR024550">
    <property type="entry name" value="TFIIEa/SarR/Rpc3_HTH_dom"/>
</dbReference>
<dbReference type="InterPro" id="IPR036388">
    <property type="entry name" value="WH-like_DNA-bd_sf"/>
</dbReference>
<dbReference type="InterPro" id="IPR036390">
    <property type="entry name" value="WH_DNA-bd_sf"/>
</dbReference>
<dbReference type="PANTHER" id="PTHR13097:SF7">
    <property type="entry name" value="GENERAL TRANSCRIPTION FACTOR IIE SUBUNIT 1"/>
    <property type="match status" value="1"/>
</dbReference>
<dbReference type="PANTHER" id="PTHR13097">
    <property type="entry name" value="TRANSCRIPTION INITIATION FACTOR IIE, ALPHA SUBUNIT"/>
    <property type="match status" value="1"/>
</dbReference>
<dbReference type="Pfam" id="PF02002">
    <property type="entry name" value="TFIIE_alpha"/>
    <property type="match status" value="1"/>
</dbReference>
<dbReference type="PIRSF" id="PIRSF006373">
    <property type="entry name" value="TF_E_archaea"/>
    <property type="match status" value="1"/>
</dbReference>
<dbReference type="SMART" id="SM00531">
    <property type="entry name" value="TFIIE"/>
    <property type="match status" value="1"/>
</dbReference>
<dbReference type="SUPFAM" id="SSF57802">
    <property type="entry name" value="Rubredoxin-like"/>
    <property type="match status" value="1"/>
</dbReference>
<dbReference type="SUPFAM" id="SSF46785">
    <property type="entry name" value="Winged helix' DNA-binding domain"/>
    <property type="match status" value="1"/>
</dbReference>
<dbReference type="PROSITE" id="PS51344">
    <property type="entry name" value="HTH_TFE_IIE"/>
    <property type="match status" value="1"/>
</dbReference>